<feature type="chain" id="PRO_1000144589" description="Large ribosomal subunit protein uL23">
    <location>
        <begin position="1"/>
        <end position="98"/>
    </location>
</feature>
<reference key="1">
    <citation type="submission" date="2008-04" db="EMBL/GenBank/DDBJ databases">
        <title>Complete sequence of chromosome of Methylobacterium populi BJ001.</title>
        <authorList>
            <consortium name="US DOE Joint Genome Institute"/>
            <person name="Copeland A."/>
            <person name="Lucas S."/>
            <person name="Lapidus A."/>
            <person name="Glavina del Rio T."/>
            <person name="Dalin E."/>
            <person name="Tice H."/>
            <person name="Bruce D."/>
            <person name="Goodwin L."/>
            <person name="Pitluck S."/>
            <person name="Chertkov O."/>
            <person name="Brettin T."/>
            <person name="Detter J.C."/>
            <person name="Han C."/>
            <person name="Kuske C.R."/>
            <person name="Schmutz J."/>
            <person name="Larimer F."/>
            <person name="Land M."/>
            <person name="Hauser L."/>
            <person name="Kyrpides N."/>
            <person name="Mikhailova N."/>
            <person name="Marx C."/>
            <person name="Richardson P."/>
        </authorList>
    </citation>
    <scope>NUCLEOTIDE SEQUENCE [LARGE SCALE GENOMIC DNA]</scope>
    <source>
        <strain>ATCC BAA-705 / NCIMB 13946 / BJ001</strain>
    </source>
</reference>
<keyword id="KW-0687">Ribonucleoprotein</keyword>
<keyword id="KW-0689">Ribosomal protein</keyword>
<keyword id="KW-0694">RNA-binding</keyword>
<keyword id="KW-0699">rRNA-binding</keyword>
<comment type="function">
    <text evidence="1">One of the early assembly proteins it binds 23S rRNA. One of the proteins that surrounds the polypeptide exit tunnel on the outside of the ribosome. Forms the main docking site for trigger factor binding to the ribosome.</text>
</comment>
<comment type="subunit">
    <text evidence="1">Part of the 50S ribosomal subunit. Contacts protein L29, and trigger factor when it is bound to the ribosome.</text>
</comment>
<comment type="similarity">
    <text evidence="1">Belongs to the universal ribosomal protein uL23 family.</text>
</comment>
<accession>B1ZLK6</accession>
<protein>
    <recommendedName>
        <fullName evidence="1">Large ribosomal subunit protein uL23</fullName>
    </recommendedName>
    <alternativeName>
        <fullName evidence="2">50S ribosomal protein L23</fullName>
    </alternativeName>
</protein>
<dbReference type="EMBL" id="CP001029">
    <property type="protein sequence ID" value="ACB80287.1"/>
    <property type="molecule type" value="Genomic_DNA"/>
</dbReference>
<dbReference type="RefSeq" id="WP_012454028.1">
    <property type="nucleotide sequence ID" value="NC_010725.1"/>
</dbReference>
<dbReference type="SMR" id="B1ZLK6"/>
<dbReference type="STRING" id="441620.Mpop_2125"/>
<dbReference type="KEGG" id="mpo:Mpop_2125"/>
<dbReference type="eggNOG" id="COG0089">
    <property type="taxonomic scope" value="Bacteria"/>
</dbReference>
<dbReference type="HOGENOM" id="CLU_037562_3_1_5"/>
<dbReference type="OrthoDB" id="9793353at2"/>
<dbReference type="Proteomes" id="UP000007136">
    <property type="component" value="Chromosome"/>
</dbReference>
<dbReference type="GO" id="GO:1990904">
    <property type="term" value="C:ribonucleoprotein complex"/>
    <property type="evidence" value="ECO:0007669"/>
    <property type="project" value="UniProtKB-KW"/>
</dbReference>
<dbReference type="GO" id="GO:0005840">
    <property type="term" value="C:ribosome"/>
    <property type="evidence" value="ECO:0007669"/>
    <property type="project" value="UniProtKB-KW"/>
</dbReference>
<dbReference type="GO" id="GO:0019843">
    <property type="term" value="F:rRNA binding"/>
    <property type="evidence" value="ECO:0007669"/>
    <property type="project" value="UniProtKB-UniRule"/>
</dbReference>
<dbReference type="GO" id="GO:0003735">
    <property type="term" value="F:structural constituent of ribosome"/>
    <property type="evidence" value="ECO:0007669"/>
    <property type="project" value="InterPro"/>
</dbReference>
<dbReference type="GO" id="GO:0006412">
    <property type="term" value="P:translation"/>
    <property type="evidence" value="ECO:0007669"/>
    <property type="project" value="UniProtKB-UniRule"/>
</dbReference>
<dbReference type="FunFam" id="3.30.70.330:FF:000001">
    <property type="entry name" value="50S ribosomal protein L23"/>
    <property type="match status" value="1"/>
</dbReference>
<dbReference type="Gene3D" id="3.30.70.330">
    <property type="match status" value="1"/>
</dbReference>
<dbReference type="HAMAP" id="MF_01369_B">
    <property type="entry name" value="Ribosomal_uL23_B"/>
    <property type="match status" value="1"/>
</dbReference>
<dbReference type="InterPro" id="IPR012677">
    <property type="entry name" value="Nucleotide-bd_a/b_plait_sf"/>
</dbReference>
<dbReference type="InterPro" id="IPR013025">
    <property type="entry name" value="Ribosomal_uL23-like"/>
</dbReference>
<dbReference type="InterPro" id="IPR012678">
    <property type="entry name" value="Ribosomal_uL23/eL15/eS24_sf"/>
</dbReference>
<dbReference type="InterPro" id="IPR001014">
    <property type="entry name" value="Ribosomal_uL23_CS"/>
</dbReference>
<dbReference type="NCBIfam" id="NF004359">
    <property type="entry name" value="PRK05738.1-3"/>
    <property type="match status" value="1"/>
</dbReference>
<dbReference type="NCBIfam" id="NF004360">
    <property type="entry name" value="PRK05738.1-5"/>
    <property type="match status" value="1"/>
</dbReference>
<dbReference type="NCBIfam" id="NF004363">
    <property type="entry name" value="PRK05738.2-4"/>
    <property type="match status" value="1"/>
</dbReference>
<dbReference type="NCBIfam" id="NF004366">
    <property type="entry name" value="PRK05738.3-2"/>
    <property type="match status" value="1"/>
</dbReference>
<dbReference type="PANTHER" id="PTHR11620">
    <property type="entry name" value="60S RIBOSOMAL PROTEIN L23A"/>
    <property type="match status" value="1"/>
</dbReference>
<dbReference type="Pfam" id="PF00276">
    <property type="entry name" value="Ribosomal_L23"/>
    <property type="match status" value="1"/>
</dbReference>
<dbReference type="SUPFAM" id="SSF54189">
    <property type="entry name" value="Ribosomal proteins S24e, L23 and L15e"/>
    <property type="match status" value="1"/>
</dbReference>
<dbReference type="PROSITE" id="PS00050">
    <property type="entry name" value="RIBOSOMAL_L23"/>
    <property type="match status" value="1"/>
</dbReference>
<sequence>MSADPRHYDVIVSPVITEKATNLTEQNKVVFRVAPKATKPQIKDAVEKLFDVKVTGVNTLTTKGKKKFFRGQRGQRSDVKKAIVTLAEGDTIDVTTGL</sequence>
<evidence type="ECO:0000255" key="1">
    <source>
        <dbReference type="HAMAP-Rule" id="MF_01369"/>
    </source>
</evidence>
<evidence type="ECO:0000305" key="2"/>
<organism>
    <name type="scientific">Methylorubrum populi (strain ATCC BAA-705 / NCIMB 13946 / BJ001)</name>
    <name type="common">Methylobacterium populi</name>
    <dbReference type="NCBI Taxonomy" id="441620"/>
    <lineage>
        <taxon>Bacteria</taxon>
        <taxon>Pseudomonadati</taxon>
        <taxon>Pseudomonadota</taxon>
        <taxon>Alphaproteobacteria</taxon>
        <taxon>Hyphomicrobiales</taxon>
        <taxon>Methylobacteriaceae</taxon>
        <taxon>Methylorubrum</taxon>
    </lineage>
</organism>
<proteinExistence type="inferred from homology"/>
<name>RL23_METPB</name>
<gene>
    <name evidence="1" type="primary">rplW</name>
    <name type="ordered locus">Mpop_2125</name>
</gene>